<dbReference type="EMBL" id="CH473953">
    <property type="protein sequence ID" value="EDM12411.1"/>
    <property type="molecule type" value="Genomic_DNA"/>
</dbReference>
<dbReference type="RefSeq" id="NP_001102978.1">
    <property type="nucleotide sequence ID" value="NM_001109508.1"/>
</dbReference>
<dbReference type="RefSeq" id="XP_017445222.1">
    <property type="nucleotide sequence ID" value="XM_017589733.1"/>
</dbReference>
<dbReference type="SMR" id="D4ABX8"/>
<dbReference type="FunCoup" id="D4ABX8">
    <property type="interactions" value="856"/>
</dbReference>
<dbReference type="STRING" id="10116.ENSRNOP00000026169"/>
<dbReference type="GlyCosmos" id="D4ABX8">
    <property type="glycosylation" value="2 sites, No reported glycans"/>
</dbReference>
<dbReference type="GlyGen" id="D4ABX8">
    <property type="glycosylation" value="2 sites"/>
</dbReference>
<dbReference type="iPTMnet" id="D4ABX8"/>
<dbReference type="PhosphoSitePlus" id="D4ABX8"/>
<dbReference type="PaxDb" id="10116-ENSRNOP00000026169"/>
<dbReference type="Ensembl" id="ENSRNOT00000026169.4">
    <property type="protein sequence ID" value="ENSRNOP00000026169.2"/>
    <property type="gene ID" value="ENSRNOG00000019356.4"/>
</dbReference>
<dbReference type="GeneID" id="688721"/>
<dbReference type="KEGG" id="rno:688721"/>
<dbReference type="UCSC" id="RGD:1585286">
    <property type="organism name" value="rat"/>
</dbReference>
<dbReference type="AGR" id="RGD:1585286"/>
<dbReference type="CTD" id="78999"/>
<dbReference type="RGD" id="1585286">
    <property type="gene designation" value="Lrfn4"/>
</dbReference>
<dbReference type="eggNOG" id="KOG0619">
    <property type="taxonomic scope" value="Eukaryota"/>
</dbReference>
<dbReference type="eggNOG" id="KOG4237">
    <property type="taxonomic scope" value="Eukaryota"/>
</dbReference>
<dbReference type="GeneTree" id="ENSGT00940000162195"/>
<dbReference type="HOGENOM" id="CLU_016998_1_0_1"/>
<dbReference type="InParanoid" id="D4ABX8"/>
<dbReference type="OMA" id="NCTVDDT"/>
<dbReference type="OrthoDB" id="676979at2759"/>
<dbReference type="PhylomeDB" id="D4ABX8"/>
<dbReference type="TreeFam" id="TF350185"/>
<dbReference type="Reactome" id="R-RNO-8849932">
    <property type="pathway name" value="Synaptic adhesion-like molecules"/>
</dbReference>
<dbReference type="PRO" id="PR:D4ABX8"/>
<dbReference type="Proteomes" id="UP000002494">
    <property type="component" value="Chromosome 1"/>
</dbReference>
<dbReference type="Proteomes" id="UP000234681">
    <property type="component" value="Chromosome 1"/>
</dbReference>
<dbReference type="Bgee" id="ENSRNOG00000019356">
    <property type="expression patterns" value="Expressed in frontal cortex and 19 other cell types or tissues"/>
</dbReference>
<dbReference type="GO" id="GO:0009986">
    <property type="term" value="C:cell surface"/>
    <property type="evidence" value="ECO:0000266"/>
    <property type="project" value="RGD"/>
</dbReference>
<dbReference type="GO" id="GO:0098982">
    <property type="term" value="C:GABA-ergic synapse"/>
    <property type="evidence" value="ECO:0000266"/>
    <property type="project" value="RGD"/>
</dbReference>
<dbReference type="GO" id="GO:0098978">
    <property type="term" value="C:glutamatergic synapse"/>
    <property type="evidence" value="ECO:0000266"/>
    <property type="project" value="RGD"/>
</dbReference>
<dbReference type="GO" id="GO:0098839">
    <property type="term" value="C:postsynaptic density membrane"/>
    <property type="evidence" value="ECO:0000314"/>
    <property type="project" value="SynGO"/>
</dbReference>
<dbReference type="GO" id="GO:0099151">
    <property type="term" value="P:regulation of postsynaptic density assembly"/>
    <property type="evidence" value="ECO:0000266"/>
    <property type="project" value="RGD"/>
</dbReference>
<dbReference type="GO" id="GO:1905606">
    <property type="term" value="P:regulation of presynapse assembly"/>
    <property type="evidence" value="ECO:0000266"/>
    <property type="project" value="RGD"/>
</dbReference>
<dbReference type="GO" id="GO:0099560">
    <property type="term" value="P:synaptic membrane adhesion"/>
    <property type="evidence" value="ECO:0000266"/>
    <property type="project" value="RGD"/>
</dbReference>
<dbReference type="FunFam" id="3.80.10.10:FF:000025">
    <property type="entry name" value="Leucine rich repeat and fibronectin type III domain containing 5"/>
    <property type="match status" value="1"/>
</dbReference>
<dbReference type="FunFam" id="3.80.10.10:FF:000045">
    <property type="entry name" value="Leucine-rich repeat and fibronectin type III domain-containing 2"/>
    <property type="match status" value="1"/>
</dbReference>
<dbReference type="FunFam" id="2.60.40.10:FF:000091">
    <property type="entry name" value="Leucine-rich repeat and fibronectin type III domain-containing protein 1"/>
    <property type="match status" value="1"/>
</dbReference>
<dbReference type="FunFam" id="2.60.40.10:FF:001081">
    <property type="entry name" value="Leucine-rich repeat and fibronectin type-III domain-containing protein 4"/>
    <property type="match status" value="1"/>
</dbReference>
<dbReference type="Gene3D" id="2.60.40.10">
    <property type="entry name" value="Immunoglobulins"/>
    <property type="match status" value="2"/>
</dbReference>
<dbReference type="Gene3D" id="3.80.10.10">
    <property type="entry name" value="Ribonuclease Inhibitor"/>
    <property type="match status" value="2"/>
</dbReference>
<dbReference type="InterPro" id="IPR000483">
    <property type="entry name" value="Cys-rich_flank_reg_C"/>
</dbReference>
<dbReference type="InterPro" id="IPR003961">
    <property type="entry name" value="FN3_dom"/>
</dbReference>
<dbReference type="InterPro" id="IPR036116">
    <property type="entry name" value="FN3_sf"/>
</dbReference>
<dbReference type="InterPro" id="IPR007110">
    <property type="entry name" value="Ig-like_dom"/>
</dbReference>
<dbReference type="InterPro" id="IPR036179">
    <property type="entry name" value="Ig-like_dom_sf"/>
</dbReference>
<dbReference type="InterPro" id="IPR013783">
    <property type="entry name" value="Ig-like_fold"/>
</dbReference>
<dbReference type="InterPro" id="IPR013098">
    <property type="entry name" value="Ig_I-set"/>
</dbReference>
<dbReference type="InterPro" id="IPR003599">
    <property type="entry name" value="Ig_sub"/>
</dbReference>
<dbReference type="InterPro" id="IPR003598">
    <property type="entry name" value="Ig_sub2"/>
</dbReference>
<dbReference type="InterPro" id="IPR001611">
    <property type="entry name" value="Leu-rich_rpt"/>
</dbReference>
<dbReference type="InterPro" id="IPR003591">
    <property type="entry name" value="Leu-rich_rpt_typical-subtyp"/>
</dbReference>
<dbReference type="InterPro" id="IPR050467">
    <property type="entry name" value="LRFN"/>
</dbReference>
<dbReference type="InterPro" id="IPR032675">
    <property type="entry name" value="LRR_dom_sf"/>
</dbReference>
<dbReference type="PANTHER" id="PTHR45842:SF3">
    <property type="entry name" value="LEUCINE-RICH REPEAT AND FIBRONECTIN TYPE-III DOMAIN-CONTAINING PROTEIN 4"/>
    <property type="match status" value="1"/>
</dbReference>
<dbReference type="PANTHER" id="PTHR45842">
    <property type="entry name" value="SYNAPTIC ADHESION-LIKE MOLECULE SALM"/>
    <property type="match status" value="1"/>
</dbReference>
<dbReference type="Pfam" id="PF00041">
    <property type="entry name" value="fn3"/>
    <property type="match status" value="1"/>
</dbReference>
<dbReference type="Pfam" id="PF07679">
    <property type="entry name" value="I-set"/>
    <property type="match status" value="1"/>
</dbReference>
<dbReference type="Pfam" id="PF00560">
    <property type="entry name" value="LRR_1"/>
    <property type="match status" value="1"/>
</dbReference>
<dbReference type="Pfam" id="PF13855">
    <property type="entry name" value="LRR_8"/>
    <property type="match status" value="2"/>
</dbReference>
<dbReference type="SMART" id="SM00060">
    <property type="entry name" value="FN3"/>
    <property type="match status" value="1"/>
</dbReference>
<dbReference type="SMART" id="SM00409">
    <property type="entry name" value="IG"/>
    <property type="match status" value="1"/>
</dbReference>
<dbReference type="SMART" id="SM00408">
    <property type="entry name" value="IGc2"/>
    <property type="match status" value="1"/>
</dbReference>
<dbReference type="SMART" id="SM00369">
    <property type="entry name" value="LRR_TYP"/>
    <property type="match status" value="6"/>
</dbReference>
<dbReference type="SMART" id="SM00082">
    <property type="entry name" value="LRRCT"/>
    <property type="match status" value="1"/>
</dbReference>
<dbReference type="SUPFAM" id="SSF49265">
    <property type="entry name" value="Fibronectin type III"/>
    <property type="match status" value="1"/>
</dbReference>
<dbReference type="SUPFAM" id="SSF48726">
    <property type="entry name" value="Immunoglobulin"/>
    <property type="match status" value="1"/>
</dbReference>
<dbReference type="SUPFAM" id="SSF52058">
    <property type="entry name" value="L domain-like"/>
    <property type="match status" value="1"/>
</dbReference>
<dbReference type="PROSITE" id="PS50853">
    <property type="entry name" value="FN3"/>
    <property type="match status" value="1"/>
</dbReference>
<dbReference type="PROSITE" id="PS50835">
    <property type="entry name" value="IG_LIKE"/>
    <property type="match status" value="1"/>
</dbReference>
<protein>
    <recommendedName>
        <fullName>Leucine-rich repeat and fibronectin type-III domain-containing protein 4</fullName>
    </recommendedName>
</protein>
<feature type="signal peptide" evidence="3">
    <location>
        <begin position="1"/>
        <end position="16"/>
    </location>
</feature>
<feature type="chain" id="PRO_0000394522" description="Leucine-rich repeat and fibronectin type-III domain-containing protein 4">
    <location>
        <begin position="17"/>
        <end position="636"/>
    </location>
</feature>
<feature type="topological domain" description="Extracellular" evidence="3">
    <location>
        <begin position="17"/>
        <end position="518"/>
    </location>
</feature>
<feature type="transmembrane region" description="Helical" evidence="3">
    <location>
        <begin position="519"/>
        <end position="539"/>
    </location>
</feature>
<feature type="topological domain" description="Cytoplasmic" evidence="3">
    <location>
        <begin position="540"/>
        <end position="636"/>
    </location>
</feature>
<feature type="domain" description="LRRNT">
    <location>
        <begin position="17"/>
        <end position="48"/>
    </location>
</feature>
<feature type="repeat" description="LRR 1">
    <location>
        <begin position="49"/>
        <end position="70"/>
    </location>
</feature>
<feature type="repeat" description="LRR 2">
    <location>
        <begin position="73"/>
        <end position="94"/>
    </location>
</feature>
<feature type="repeat" description="LRR 3">
    <location>
        <begin position="97"/>
        <end position="118"/>
    </location>
</feature>
<feature type="repeat" description="LRR 4">
    <location>
        <begin position="121"/>
        <end position="142"/>
    </location>
</feature>
<feature type="repeat" description="LRR 5">
    <location>
        <begin position="146"/>
        <end position="169"/>
    </location>
</feature>
<feature type="repeat" description="LRR 6">
    <location>
        <begin position="170"/>
        <end position="191"/>
    </location>
</feature>
<feature type="repeat" description="LRR 7">
    <location>
        <begin position="194"/>
        <end position="215"/>
    </location>
</feature>
<feature type="domain" description="LRRCT">
    <location>
        <begin position="234"/>
        <end position="280"/>
    </location>
</feature>
<feature type="domain" description="Ig-like">
    <location>
        <begin position="281"/>
        <end position="367"/>
    </location>
</feature>
<feature type="domain" description="Fibronectin type-III" evidence="5">
    <location>
        <begin position="405"/>
        <end position="502"/>
    </location>
</feature>
<feature type="region of interest" description="Disordered" evidence="6">
    <location>
        <begin position="556"/>
        <end position="585"/>
    </location>
</feature>
<feature type="short sequence motif" description="PDZ-binding">
    <location>
        <begin position="633"/>
        <end position="636"/>
    </location>
</feature>
<feature type="compositionally biased region" description="Pro residues" evidence="6">
    <location>
        <begin position="569"/>
        <end position="580"/>
    </location>
</feature>
<feature type="modified residue" description="Phosphoserine" evidence="2">
    <location>
        <position position="585"/>
    </location>
</feature>
<feature type="modified residue" description="Phosphoserine" evidence="8">
    <location>
        <position position="627"/>
    </location>
</feature>
<feature type="glycosylation site" description="N-linked (GlcNAc...) asparagine" evidence="3">
    <location>
        <position position="25"/>
    </location>
</feature>
<feature type="glycosylation site" description="N-linked (GlcNAc...) asparagine" evidence="3">
    <location>
        <position position="333"/>
    </location>
</feature>
<feature type="disulfide bond" evidence="4">
    <location>
        <begin position="302"/>
        <end position="351"/>
    </location>
</feature>
<accession>D4ABX8</accession>
<keyword id="KW-1015">Disulfide bond</keyword>
<keyword id="KW-0325">Glycoprotein</keyword>
<keyword id="KW-0393">Immunoglobulin domain</keyword>
<keyword id="KW-0433">Leucine-rich repeat</keyword>
<keyword id="KW-0472">Membrane</keyword>
<keyword id="KW-0597">Phosphoprotein</keyword>
<keyword id="KW-1185">Reference proteome</keyword>
<keyword id="KW-0677">Repeat</keyword>
<keyword id="KW-0732">Signal</keyword>
<keyword id="KW-0812">Transmembrane</keyword>
<keyword id="KW-1133">Transmembrane helix</keyword>
<reference key="1">
    <citation type="submission" date="2005-07" db="EMBL/GenBank/DDBJ databases">
        <authorList>
            <person name="Mural R.J."/>
            <person name="Adams M.D."/>
            <person name="Myers E.W."/>
            <person name="Smith H.O."/>
            <person name="Venter J.C."/>
        </authorList>
    </citation>
    <scope>NUCLEOTIDE SEQUENCE [LARGE SCALE GENOMIC DNA]</scope>
</reference>
<reference key="2">
    <citation type="journal article" date="2008" name="J. Biol. Chem.">
        <title>The SALM family of adhesion-like molecules forms heteromeric and homomeric complexes.</title>
        <authorList>
            <person name="Seabold G.K."/>
            <person name="Wang P.Y."/>
            <person name="Chang K."/>
            <person name="Wang C.Y."/>
            <person name="Wang Y.X."/>
            <person name="Petralia R.S."/>
            <person name="Wenthold R.J."/>
        </authorList>
    </citation>
    <scope>INTERACTION WITH LRFN1 AND LRFN2</scope>
</reference>
<reference key="3">
    <citation type="journal article" date="2012" name="Nat. Commun.">
        <title>Quantitative maps of protein phosphorylation sites across 14 different rat organs and tissues.</title>
        <authorList>
            <person name="Lundby A."/>
            <person name="Secher A."/>
            <person name="Lage K."/>
            <person name="Nordsborg N.B."/>
            <person name="Dmytriyev A."/>
            <person name="Lundby C."/>
            <person name="Olsen J.V."/>
        </authorList>
    </citation>
    <scope>PHOSPHORYLATION [LARGE SCALE ANALYSIS] AT SER-627</scope>
    <scope>IDENTIFICATION BY MASS SPECTROMETRY [LARGE SCALE ANALYSIS]</scope>
</reference>
<proteinExistence type="evidence at protein level"/>
<name>LRFN4_RAT</name>
<gene>
    <name type="primary">Lrfn4</name>
    <name type="synonym">Salm3</name>
</gene>
<organism>
    <name type="scientific">Rattus norvegicus</name>
    <name type="common">Rat</name>
    <dbReference type="NCBI Taxonomy" id="10116"/>
    <lineage>
        <taxon>Eukaryota</taxon>
        <taxon>Metazoa</taxon>
        <taxon>Chordata</taxon>
        <taxon>Craniata</taxon>
        <taxon>Vertebrata</taxon>
        <taxon>Euteleostomi</taxon>
        <taxon>Mammalia</taxon>
        <taxon>Eutheria</taxon>
        <taxon>Euarchontoglires</taxon>
        <taxon>Glires</taxon>
        <taxon>Rodentia</taxon>
        <taxon>Myomorpha</taxon>
        <taxon>Muroidea</taxon>
        <taxon>Muridae</taxon>
        <taxon>Murinae</taxon>
        <taxon>Rattus</taxon>
    </lineage>
</organism>
<comment type="function">
    <text evidence="1">Promotes neurite outgrowth in hippocampal neurons. May play a role in redistributing DLG4 to the cell periphery (By similarity).</text>
</comment>
<comment type="subunit">
    <text evidence="1">Forms heteromeric complexes with LRFN1 and LRFN2. Can form heteromeric complexes with LRFN3 and LRFN5 (By similarity). Unable to form homophilic interactions across cell junctions (By similarity). Interacts with DLG1, DLG2, DLG3 and DLG4 (By similarity).</text>
</comment>
<comment type="subcellular location">
    <subcellularLocation>
        <location evidence="1">Membrane</location>
        <topology evidence="1">Single-pass membrane protein</topology>
    </subcellularLocation>
</comment>
<comment type="domain">
    <text evidence="1">The PDZ-binding motif is required for neurite outgrowth promotion and interaction with DLG1, DLG3- and DLG4.</text>
</comment>
<comment type="PTM">
    <text evidence="1">Glycosylated.</text>
</comment>
<comment type="similarity">
    <text evidence="7">Belongs to the LRFN family.</text>
</comment>
<evidence type="ECO:0000250" key="1"/>
<evidence type="ECO:0000250" key="2">
    <source>
        <dbReference type="UniProtKB" id="Q6PJG9"/>
    </source>
</evidence>
<evidence type="ECO:0000255" key="3"/>
<evidence type="ECO:0000255" key="4">
    <source>
        <dbReference type="PROSITE-ProRule" id="PRU00114"/>
    </source>
</evidence>
<evidence type="ECO:0000255" key="5">
    <source>
        <dbReference type="PROSITE-ProRule" id="PRU00316"/>
    </source>
</evidence>
<evidence type="ECO:0000256" key="6">
    <source>
        <dbReference type="SAM" id="MobiDB-lite"/>
    </source>
</evidence>
<evidence type="ECO:0000305" key="7"/>
<evidence type="ECO:0007744" key="8">
    <source>
    </source>
</evidence>
<sequence>MAPPLLLLLLASGAAACPLPCVCQNLSESLSTLCAHRGLLFVPPNVDRRTVELRLADNFIQALGPPDFRNMTGLVDLTLSRNAITRIGARSFGDLESLRSLHLDGNRLVELGSSSLRGPVNLQHLILSGNQLGRIAPGAFDDFLDSLEDLDVSYNNLRQVPWAGIGSMPALHTLNLDHNLIDALPPGVFAQLSQLSRLDLTSNRLATLAPDPLFSRGRDAEASPSPLVLSFSGNPLHCNCELLWLRRLARPDDLETCASPPTLAGRYFWAVPEGEFSCEPPLIARHTQRLWVLEGQRATLRCRALGDPVPTMHWVGPDDRLVGNSSRAWAFPNGTLEIGVTGAGDAGAYTCIATNPAGEATARVELRVLALPHGGNTSAEGGRPGPSDIAASARTAAEGEGTLESEPAVQVTEVTATSGLVSWGPGRPADPVWMFQIQYNSSEDETLIYRIVPASSQHFLLKHLVPGADYDLCLLALSPAAGPSDLTATRLLGCAHFSTLPATPLCHALQAHVLGGTLTVAVGGVLVAALLVFTVALLVRGRGAGNGRLPLKLSHVQSQTNGGTSPMPKSHPPRSPPPRPQRSCSLDLGDTGGCYGYARRLGGAWARRSHSVHGGLLGAGCRGMGGSAERLEESVV</sequence>